<protein>
    <recommendedName>
        <fullName evidence="1">Protein-arginine kinase</fullName>
        <ecNumber evidence="1">2.7.14.1</ecNumber>
    </recommendedName>
</protein>
<organism>
    <name type="scientific">Clostridium novyi (strain NT)</name>
    <dbReference type="NCBI Taxonomy" id="386415"/>
    <lineage>
        <taxon>Bacteria</taxon>
        <taxon>Bacillati</taxon>
        <taxon>Bacillota</taxon>
        <taxon>Clostridia</taxon>
        <taxon>Eubacteriales</taxon>
        <taxon>Clostridiaceae</taxon>
        <taxon>Clostridium</taxon>
    </lineage>
</organism>
<accession>A0PXR8</accession>
<reference key="1">
    <citation type="journal article" date="2006" name="Nat. Biotechnol.">
        <title>The genome and transcriptomes of the anti-tumor agent Clostridium novyi-NT.</title>
        <authorList>
            <person name="Bettegowda C."/>
            <person name="Huang X."/>
            <person name="Lin J."/>
            <person name="Cheong I."/>
            <person name="Kohli M."/>
            <person name="Szabo S.A."/>
            <person name="Zhang X."/>
            <person name="Diaz L.A. Jr."/>
            <person name="Velculescu V.E."/>
            <person name="Parmigiani G."/>
            <person name="Kinzler K.W."/>
            <person name="Vogelstein B."/>
            <person name="Zhou S."/>
        </authorList>
    </citation>
    <scope>NUCLEOTIDE SEQUENCE [LARGE SCALE GENOMIC DNA]</scope>
    <source>
        <strain>NT</strain>
    </source>
</reference>
<dbReference type="EC" id="2.7.14.1" evidence="1"/>
<dbReference type="EMBL" id="CP000382">
    <property type="protein sequence ID" value="ABK62188.1"/>
    <property type="molecule type" value="Genomic_DNA"/>
</dbReference>
<dbReference type="RefSeq" id="WP_011721190.1">
    <property type="nucleotide sequence ID" value="NC_008593.1"/>
</dbReference>
<dbReference type="SMR" id="A0PXR8"/>
<dbReference type="STRING" id="386415.NT01CX_1086"/>
<dbReference type="KEGG" id="cno:NT01CX_1086"/>
<dbReference type="PATRIC" id="fig|386415.7.peg.196"/>
<dbReference type="eggNOG" id="COG3869">
    <property type="taxonomic scope" value="Bacteria"/>
</dbReference>
<dbReference type="HOGENOM" id="CLU_066591_1_0_9"/>
<dbReference type="Proteomes" id="UP000008220">
    <property type="component" value="Chromosome"/>
</dbReference>
<dbReference type="GO" id="GO:0005615">
    <property type="term" value="C:extracellular space"/>
    <property type="evidence" value="ECO:0007669"/>
    <property type="project" value="TreeGrafter"/>
</dbReference>
<dbReference type="GO" id="GO:0005524">
    <property type="term" value="F:ATP binding"/>
    <property type="evidence" value="ECO:0007669"/>
    <property type="project" value="UniProtKB-KW"/>
</dbReference>
<dbReference type="GO" id="GO:0004111">
    <property type="term" value="F:creatine kinase activity"/>
    <property type="evidence" value="ECO:0007669"/>
    <property type="project" value="InterPro"/>
</dbReference>
<dbReference type="GO" id="GO:0004672">
    <property type="term" value="F:protein kinase activity"/>
    <property type="evidence" value="ECO:0007669"/>
    <property type="project" value="UniProtKB-UniRule"/>
</dbReference>
<dbReference type="GO" id="GO:0046314">
    <property type="term" value="P:phosphocreatine biosynthetic process"/>
    <property type="evidence" value="ECO:0007669"/>
    <property type="project" value="InterPro"/>
</dbReference>
<dbReference type="CDD" id="cd07930">
    <property type="entry name" value="bacterial_phosphagen_kinase"/>
    <property type="match status" value="1"/>
</dbReference>
<dbReference type="Gene3D" id="3.30.590.10">
    <property type="entry name" value="Glutamine synthetase/guanido kinase, catalytic domain"/>
    <property type="match status" value="1"/>
</dbReference>
<dbReference type="HAMAP" id="MF_00602">
    <property type="entry name" value="Prot_Arg_kinase"/>
    <property type="match status" value="1"/>
</dbReference>
<dbReference type="InterPro" id="IPR023660">
    <property type="entry name" value="Arg_Kinase"/>
</dbReference>
<dbReference type="InterPro" id="IPR000749">
    <property type="entry name" value="ATP-guanido_PTrfase"/>
</dbReference>
<dbReference type="InterPro" id="IPR022415">
    <property type="entry name" value="ATP-guanido_PTrfase_AS"/>
</dbReference>
<dbReference type="InterPro" id="IPR022414">
    <property type="entry name" value="ATP-guanido_PTrfase_cat"/>
</dbReference>
<dbReference type="InterPro" id="IPR014746">
    <property type="entry name" value="Gln_synth/guanido_kin_cat_dom"/>
</dbReference>
<dbReference type="NCBIfam" id="NF002194">
    <property type="entry name" value="PRK01059.1-4"/>
    <property type="match status" value="1"/>
</dbReference>
<dbReference type="PANTHER" id="PTHR11547:SF38">
    <property type="entry name" value="ARGININE KINASE 1-RELATED"/>
    <property type="match status" value="1"/>
</dbReference>
<dbReference type="PANTHER" id="PTHR11547">
    <property type="entry name" value="ARGININE OR CREATINE KINASE"/>
    <property type="match status" value="1"/>
</dbReference>
<dbReference type="Pfam" id="PF00217">
    <property type="entry name" value="ATP-gua_Ptrans"/>
    <property type="match status" value="1"/>
</dbReference>
<dbReference type="SUPFAM" id="SSF55931">
    <property type="entry name" value="Glutamine synthetase/guanido kinase"/>
    <property type="match status" value="1"/>
</dbReference>
<dbReference type="PROSITE" id="PS00112">
    <property type="entry name" value="PHOSPHAGEN_KINASE"/>
    <property type="match status" value="1"/>
</dbReference>
<dbReference type="PROSITE" id="PS51510">
    <property type="entry name" value="PHOSPHAGEN_KINASE_C"/>
    <property type="match status" value="1"/>
</dbReference>
<keyword id="KW-0067">ATP-binding</keyword>
<keyword id="KW-0418">Kinase</keyword>
<keyword id="KW-0547">Nucleotide-binding</keyword>
<keyword id="KW-1185">Reference proteome</keyword>
<keyword id="KW-0808">Transferase</keyword>
<proteinExistence type="inferred from homology"/>
<gene>
    <name evidence="1" type="primary">mcsB</name>
    <name type="ordered locus">NT01CX_1086</name>
</gene>
<name>MCSB_CLONN</name>
<evidence type="ECO:0000255" key="1">
    <source>
        <dbReference type="HAMAP-Rule" id="MF_00602"/>
    </source>
</evidence>
<feature type="chain" id="PRO_1000025871" description="Protein-arginine kinase">
    <location>
        <begin position="1"/>
        <end position="344"/>
    </location>
</feature>
<feature type="domain" description="Phosphagen kinase C-terminal" evidence="1">
    <location>
        <begin position="14"/>
        <end position="244"/>
    </location>
</feature>
<feature type="binding site" evidence="1">
    <location>
        <begin position="17"/>
        <end position="21"/>
    </location>
    <ligand>
        <name>ATP</name>
        <dbReference type="ChEBI" id="CHEBI:30616"/>
    </ligand>
</feature>
<feature type="binding site" evidence="1">
    <location>
        <position position="81"/>
    </location>
    <ligand>
        <name>ATP</name>
        <dbReference type="ChEBI" id="CHEBI:30616"/>
    </ligand>
</feature>
<feature type="binding site" evidence="1">
    <location>
        <position position="115"/>
    </location>
    <ligand>
        <name>ATP</name>
        <dbReference type="ChEBI" id="CHEBI:30616"/>
    </ligand>
</feature>
<feature type="binding site" evidence="1">
    <location>
        <begin position="166"/>
        <end position="170"/>
    </location>
    <ligand>
        <name>ATP</name>
        <dbReference type="ChEBI" id="CHEBI:30616"/>
    </ligand>
</feature>
<feature type="binding site" evidence="1">
    <location>
        <begin position="197"/>
        <end position="202"/>
    </location>
    <ligand>
        <name>ATP</name>
        <dbReference type="ChEBI" id="CHEBI:30616"/>
    </ligand>
</feature>
<sequence>MENWINVNNASEDIVLSSRIRLARNLKGIPFPNKLTVDSAKDVVEKVENAIFTIPDLKDNLKSNHLWENDNETNKMYLEKHLISRGLIKHAKGSAFLIDNDETISIMINEEDHLRLQTITSGLNFKEVFKSINELDDLLEENLEYAFHEKLGYITACPTNLGTGLRASAMVHLPALTANKDIVKILNGITQLGMTIRGLYGEGSKAYGNLYQISNQITLGRAEEQIITSLEGIVKQIIQQERLARERMKTKYKYEVEDKIFRSLGVLKSARILTAREVLNLLSNVRLGVEEGIISNIDKSILNNLLINTQSASIKKSSQKKLTDIEEKIERAKIVKEGLKGIEL</sequence>
<comment type="function">
    <text evidence="1">Catalyzes the specific phosphorylation of arginine residues in proteins.</text>
</comment>
<comment type="catalytic activity">
    <reaction evidence="1">
        <text>L-arginyl-[protein] + ATP = N(omega)-phospho-L-arginyl-[protein] + ADP + H(+)</text>
        <dbReference type="Rhea" id="RHEA:43384"/>
        <dbReference type="Rhea" id="RHEA-COMP:10532"/>
        <dbReference type="Rhea" id="RHEA-COMP:10533"/>
        <dbReference type="ChEBI" id="CHEBI:15378"/>
        <dbReference type="ChEBI" id="CHEBI:29965"/>
        <dbReference type="ChEBI" id="CHEBI:30616"/>
        <dbReference type="ChEBI" id="CHEBI:83226"/>
        <dbReference type="ChEBI" id="CHEBI:456216"/>
        <dbReference type="EC" id="2.7.14.1"/>
    </reaction>
</comment>
<comment type="similarity">
    <text evidence="1">Belongs to the ATP:guanido phosphotransferase family.</text>
</comment>